<dbReference type="EC" id="6.3.3.3" evidence="1"/>
<dbReference type="EMBL" id="CP000901">
    <property type="protein sequence ID" value="ABX88123.1"/>
    <property type="molecule type" value="Genomic_DNA"/>
</dbReference>
<dbReference type="RefSeq" id="WP_002216554.1">
    <property type="nucleotide sequence ID" value="NZ_CP009935.1"/>
</dbReference>
<dbReference type="SMR" id="A9R3D1"/>
<dbReference type="GeneID" id="57977293"/>
<dbReference type="KEGG" id="ypg:YpAngola_A1428"/>
<dbReference type="PATRIC" id="fig|349746.12.peg.2394"/>
<dbReference type="UniPathway" id="UPA00078">
    <property type="reaction ID" value="UER00161"/>
</dbReference>
<dbReference type="GO" id="GO:0005829">
    <property type="term" value="C:cytosol"/>
    <property type="evidence" value="ECO:0007669"/>
    <property type="project" value="TreeGrafter"/>
</dbReference>
<dbReference type="GO" id="GO:0005524">
    <property type="term" value="F:ATP binding"/>
    <property type="evidence" value="ECO:0007669"/>
    <property type="project" value="UniProtKB-UniRule"/>
</dbReference>
<dbReference type="GO" id="GO:0004141">
    <property type="term" value="F:dethiobiotin synthase activity"/>
    <property type="evidence" value="ECO:0007669"/>
    <property type="project" value="UniProtKB-UniRule"/>
</dbReference>
<dbReference type="GO" id="GO:0000287">
    <property type="term" value="F:magnesium ion binding"/>
    <property type="evidence" value="ECO:0007669"/>
    <property type="project" value="UniProtKB-UniRule"/>
</dbReference>
<dbReference type="GO" id="GO:0009102">
    <property type="term" value="P:biotin biosynthetic process"/>
    <property type="evidence" value="ECO:0007669"/>
    <property type="project" value="UniProtKB-UniRule"/>
</dbReference>
<dbReference type="CDD" id="cd03109">
    <property type="entry name" value="DTBS"/>
    <property type="match status" value="1"/>
</dbReference>
<dbReference type="FunFam" id="3.40.50.300:FF:000292">
    <property type="entry name" value="ATP-dependent dethiobiotin synthetase BioD"/>
    <property type="match status" value="1"/>
</dbReference>
<dbReference type="Gene3D" id="3.40.50.300">
    <property type="entry name" value="P-loop containing nucleotide triphosphate hydrolases"/>
    <property type="match status" value="1"/>
</dbReference>
<dbReference type="HAMAP" id="MF_00336">
    <property type="entry name" value="BioD"/>
    <property type="match status" value="1"/>
</dbReference>
<dbReference type="InterPro" id="IPR004472">
    <property type="entry name" value="DTB_synth_BioD"/>
</dbReference>
<dbReference type="InterPro" id="IPR027417">
    <property type="entry name" value="P-loop_NTPase"/>
</dbReference>
<dbReference type="NCBIfam" id="TIGR00347">
    <property type="entry name" value="bioD"/>
    <property type="match status" value="1"/>
</dbReference>
<dbReference type="PANTHER" id="PTHR43210">
    <property type="entry name" value="DETHIOBIOTIN SYNTHETASE"/>
    <property type="match status" value="1"/>
</dbReference>
<dbReference type="PANTHER" id="PTHR43210:SF5">
    <property type="entry name" value="DETHIOBIOTIN SYNTHETASE"/>
    <property type="match status" value="1"/>
</dbReference>
<dbReference type="Pfam" id="PF13500">
    <property type="entry name" value="AAA_26"/>
    <property type="match status" value="1"/>
</dbReference>
<dbReference type="PIRSF" id="PIRSF006755">
    <property type="entry name" value="DTB_synth"/>
    <property type="match status" value="1"/>
</dbReference>
<dbReference type="SUPFAM" id="SSF52540">
    <property type="entry name" value="P-loop containing nucleoside triphosphate hydrolases"/>
    <property type="match status" value="1"/>
</dbReference>
<sequence>MTKRWFITGTDTDVGKTVASCALLQAATAQGYRTAGYKPVASGSQMTADGLRNSDALALQANSSQRLGYSQVNPFTFLEATSPHIASESEGRAIPLTALSQGLRQLEPSADWILIEGAGGWFTPLSPQATFADWVQQEQLPVIMVVGVKLGCINHALLTAQAIQHAGLTLAGWVANEVTPAGRRQAEYQATLTRMITAPLLGIIPYLSDIEENPVTTRRDLGHYLDLTVLRAAEREAVNM</sequence>
<proteinExistence type="inferred from homology"/>
<name>BIOD_YERPG</name>
<protein>
    <recommendedName>
        <fullName evidence="1">ATP-dependent dethiobiotin synthetase BioD</fullName>
        <ecNumber evidence="1">6.3.3.3</ecNumber>
    </recommendedName>
    <alternativeName>
        <fullName evidence="1">DTB synthetase</fullName>
        <shortName evidence="1">DTBS</shortName>
    </alternativeName>
    <alternativeName>
        <fullName evidence="1">Dethiobiotin synthase</fullName>
    </alternativeName>
</protein>
<gene>
    <name evidence="1" type="primary">bioD</name>
    <name type="ordered locus">YpAngola_A1428</name>
</gene>
<organism>
    <name type="scientific">Yersinia pestis bv. Antiqua (strain Angola)</name>
    <dbReference type="NCBI Taxonomy" id="349746"/>
    <lineage>
        <taxon>Bacteria</taxon>
        <taxon>Pseudomonadati</taxon>
        <taxon>Pseudomonadota</taxon>
        <taxon>Gammaproteobacteria</taxon>
        <taxon>Enterobacterales</taxon>
        <taxon>Yersiniaceae</taxon>
        <taxon>Yersinia</taxon>
    </lineage>
</organism>
<reference key="1">
    <citation type="journal article" date="2010" name="J. Bacteriol.">
        <title>Genome sequence of the deep-rooted Yersinia pestis strain Angola reveals new insights into the evolution and pangenome of the plague bacterium.</title>
        <authorList>
            <person name="Eppinger M."/>
            <person name="Worsham P.L."/>
            <person name="Nikolich M.P."/>
            <person name="Riley D.R."/>
            <person name="Sebastian Y."/>
            <person name="Mou S."/>
            <person name="Achtman M."/>
            <person name="Lindler L.E."/>
            <person name="Ravel J."/>
        </authorList>
    </citation>
    <scope>NUCLEOTIDE SEQUENCE [LARGE SCALE GENOMIC DNA]</scope>
    <source>
        <strain>Angola</strain>
    </source>
</reference>
<keyword id="KW-0067">ATP-binding</keyword>
<keyword id="KW-0093">Biotin biosynthesis</keyword>
<keyword id="KW-0963">Cytoplasm</keyword>
<keyword id="KW-0436">Ligase</keyword>
<keyword id="KW-0460">Magnesium</keyword>
<keyword id="KW-0479">Metal-binding</keyword>
<keyword id="KW-0547">Nucleotide-binding</keyword>
<comment type="function">
    <text evidence="1">Catalyzes a mechanistically unusual reaction, the ATP-dependent insertion of CO2 between the N7 and N8 nitrogen atoms of 7,8-diaminopelargonic acid (DAPA, also called 7,8-diammoniononanoate) to form a ureido ring.</text>
</comment>
<comment type="catalytic activity">
    <reaction evidence="1">
        <text>(7R,8S)-7,8-diammoniononanoate + CO2 + ATP = (4R,5S)-dethiobiotin + ADP + phosphate + 3 H(+)</text>
        <dbReference type="Rhea" id="RHEA:15805"/>
        <dbReference type="ChEBI" id="CHEBI:15378"/>
        <dbReference type="ChEBI" id="CHEBI:16526"/>
        <dbReference type="ChEBI" id="CHEBI:30616"/>
        <dbReference type="ChEBI" id="CHEBI:43474"/>
        <dbReference type="ChEBI" id="CHEBI:149469"/>
        <dbReference type="ChEBI" id="CHEBI:149473"/>
        <dbReference type="ChEBI" id="CHEBI:456216"/>
        <dbReference type="EC" id="6.3.3.3"/>
    </reaction>
</comment>
<comment type="cofactor">
    <cofactor evidence="1">
        <name>Mg(2+)</name>
        <dbReference type="ChEBI" id="CHEBI:18420"/>
    </cofactor>
</comment>
<comment type="pathway">
    <text evidence="1">Cofactor biosynthesis; biotin biosynthesis; biotin from 7,8-diaminononanoate: step 1/2.</text>
</comment>
<comment type="subunit">
    <text evidence="1">Homodimer.</text>
</comment>
<comment type="subcellular location">
    <subcellularLocation>
        <location evidence="1">Cytoplasm</location>
    </subcellularLocation>
</comment>
<comment type="similarity">
    <text evidence="1">Belongs to the dethiobiotin synthetase family.</text>
</comment>
<feature type="chain" id="PRO_1000119890" description="ATP-dependent dethiobiotin synthetase BioD">
    <location>
        <begin position="1"/>
        <end position="240"/>
    </location>
</feature>
<feature type="active site" evidence="1">
    <location>
        <position position="38"/>
    </location>
</feature>
<feature type="binding site" evidence="1">
    <location>
        <begin position="13"/>
        <end position="18"/>
    </location>
    <ligand>
        <name>ATP</name>
        <dbReference type="ChEBI" id="CHEBI:30616"/>
    </ligand>
</feature>
<feature type="binding site" evidence="1">
    <location>
        <position position="17"/>
    </location>
    <ligand>
        <name>Mg(2+)</name>
        <dbReference type="ChEBI" id="CHEBI:18420"/>
    </ligand>
</feature>
<feature type="binding site" evidence="1">
    <location>
        <position position="42"/>
    </location>
    <ligand>
        <name>substrate</name>
    </ligand>
</feature>
<feature type="binding site" evidence="1">
    <location>
        <position position="55"/>
    </location>
    <ligand>
        <name>ATP</name>
        <dbReference type="ChEBI" id="CHEBI:30616"/>
    </ligand>
</feature>
<feature type="binding site" evidence="1">
    <location>
        <position position="55"/>
    </location>
    <ligand>
        <name>Mg(2+)</name>
        <dbReference type="ChEBI" id="CHEBI:18420"/>
    </ligand>
</feature>
<feature type="binding site" evidence="1">
    <location>
        <begin position="116"/>
        <end position="119"/>
    </location>
    <ligand>
        <name>ATP</name>
        <dbReference type="ChEBI" id="CHEBI:30616"/>
    </ligand>
</feature>
<feature type="binding site" evidence="1">
    <location>
        <position position="116"/>
    </location>
    <ligand>
        <name>Mg(2+)</name>
        <dbReference type="ChEBI" id="CHEBI:18420"/>
    </ligand>
</feature>
<feature type="binding site" evidence="1">
    <location>
        <begin position="176"/>
        <end position="177"/>
    </location>
    <ligand>
        <name>ATP</name>
        <dbReference type="ChEBI" id="CHEBI:30616"/>
    </ligand>
</feature>
<feature type="binding site" evidence="1">
    <location>
        <begin position="205"/>
        <end position="207"/>
    </location>
    <ligand>
        <name>ATP</name>
        <dbReference type="ChEBI" id="CHEBI:30616"/>
    </ligand>
</feature>
<feature type="binding site" evidence="1">
    <location>
        <position position="212"/>
    </location>
    <ligand>
        <name>ATP</name>
        <dbReference type="ChEBI" id="CHEBI:30616"/>
    </ligand>
</feature>
<evidence type="ECO:0000255" key="1">
    <source>
        <dbReference type="HAMAP-Rule" id="MF_00336"/>
    </source>
</evidence>
<accession>A9R3D1</accession>